<accession>A5FE24</accession>
<reference key="1">
    <citation type="journal article" date="2009" name="Appl. Environ. Microbiol.">
        <title>Novel features of the polysaccharide-digesting gliding bacterium Flavobacterium johnsoniae as revealed by genome sequence analysis.</title>
        <authorList>
            <person name="McBride M.J."/>
            <person name="Xie G."/>
            <person name="Martens E.C."/>
            <person name="Lapidus A."/>
            <person name="Henrissat B."/>
            <person name="Rhodes R.G."/>
            <person name="Goltsman E."/>
            <person name="Wang W."/>
            <person name="Xu J."/>
            <person name="Hunnicutt D.W."/>
            <person name="Staroscik A.M."/>
            <person name="Hoover T.R."/>
            <person name="Cheng Y.Q."/>
            <person name="Stein J.L."/>
        </authorList>
    </citation>
    <scope>NUCLEOTIDE SEQUENCE [LARGE SCALE GENOMIC DNA]</scope>
    <source>
        <strain>ATCC 17061 / DSM 2064 / JCM 8514 / BCRC 14874 / CCUG 350202 / NBRC 14942 / NCIMB 11054 / UW101</strain>
    </source>
</reference>
<gene>
    <name evidence="1" type="primary">ackA</name>
    <name type="ordered locus">Fjoh_3528</name>
</gene>
<sequence length="394" mass="43237">MKILIINSGSSSIKYQLMVMPANEVICSGMIDRIGLETSNITFKTVSNSFEEILPVPTHKVGLQKVADMLLDAETGVIKTTSEITAVGHRVVHGGSYFSNTTVITEEVKEKIKELSELAPLHNPAHLVGINVAEEIFASAKQVAVFDTAFHQTIPVEAHKYAIPNFLLTEHKVRVYGFHGTSHKYVSEKAINYLEKGSKIITIHLGNGCSMTAVKDGKSIDTTMGFSPANGLVMGTRAGDIDQSVIFYMVKSLGYTPDEVNSILLKQSGMLGLTGYSDLRDIESKASEGNKDCQLALLMNAYRIRKTIGSYAAALNGLDAIVFTAGIGENSSFMRNLICTDMDYFGIEIDKEKNQIRSKELREINTPNSIVKILVVPTDEEFEIANQVYQLLEN</sequence>
<comment type="function">
    <text evidence="1">Catalyzes the formation of acetyl phosphate from acetate and ATP. Can also catalyze the reverse reaction.</text>
</comment>
<comment type="catalytic activity">
    <reaction evidence="1">
        <text>acetate + ATP = acetyl phosphate + ADP</text>
        <dbReference type="Rhea" id="RHEA:11352"/>
        <dbReference type="ChEBI" id="CHEBI:22191"/>
        <dbReference type="ChEBI" id="CHEBI:30089"/>
        <dbReference type="ChEBI" id="CHEBI:30616"/>
        <dbReference type="ChEBI" id="CHEBI:456216"/>
        <dbReference type="EC" id="2.7.2.1"/>
    </reaction>
</comment>
<comment type="cofactor">
    <cofactor evidence="1">
        <name>Mg(2+)</name>
        <dbReference type="ChEBI" id="CHEBI:18420"/>
    </cofactor>
    <cofactor evidence="1">
        <name>Mn(2+)</name>
        <dbReference type="ChEBI" id="CHEBI:29035"/>
    </cofactor>
    <text evidence="1">Mg(2+). Can also accept Mn(2+).</text>
</comment>
<comment type="pathway">
    <text evidence="1">Metabolic intermediate biosynthesis; acetyl-CoA biosynthesis; acetyl-CoA from acetate: step 1/2.</text>
</comment>
<comment type="subunit">
    <text evidence="1">Homodimer.</text>
</comment>
<comment type="subcellular location">
    <subcellularLocation>
        <location evidence="1">Cytoplasm</location>
    </subcellularLocation>
</comment>
<comment type="similarity">
    <text evidence="1">Belongs to the acetokinase family.</text>
</comment>
<feature type="chain" id="PRO_1000074186" description="Acetate kinase">
    <location>
        <begin position="1"/>
        <end position="394"/>
    </location>
</feature>
<feature type="active site" description="Proton donor/acceptor" evidence="1">
    <location>
        <position position="147"/>
    </location>
</feature>
<feature type="binding site" evidence="1">
    <location>
        <position position="7"/>
    </location>
    <ligand>
        <name>Mg(2+)</name>
        <dbReference type="ChEBI" id="CHEBI:18420"/>
    </ligand>
</feature>
<feature type="binding site" evidence="1">
    <location>
        <position position="14"/>
    </location>
    <ligand>
        <name>ATP</name>
        <dbReference type="ChEBI" id="CHEBI:30616"/>
    </ligand>
</feature>
<feature type="binding site" evidence="1">
    <location>
        <position position="90"/>
    </location>
    <ligand>
        <name>substrate</name>
    </ligand>
</feature>
<feature type="binding site" evidence="1">
    <location>
        <begin position="204"/>
        <end position="208"/>
    </location>
    <ligand>
        <name>ATP</name>
        <dbReference type="ChEBI" id="CHEBI:30616"/>
    </ligand>
</feature>
<feature type="binding site" evidence="1">
    <location>
        <begin position="278"/>
        <end position="280"/>
    </location>
    <ligand>
        <name>ATP</name>
        <dbReference type="ChEBI" id="CHEBI:30616"/>
    </ligand>
</feature>
<feature type="binding site" evidence="1">
    <location>
        <begin position="326"/>
        <end position="330"/>
    </location>
    <ligand>
        <name>ATP</name>
        <dbReference type="ChEBI" id="CHEBI:30616"/>
    </ligand>
</feature>
<feature type="binding site" evidence="1">
    <location>
        <position position="380"/>
    </location>
    <ligand>
        <name>Mg(2+)</name>
        <dbReference type="ChEBI" id="CHEBI:18420"/>
    </ligand>
</feature>
<feature type="site" description="Transition state stabilizer" evidence="1">
    <location>
        <position position="179"/>
    </location>
</feature>
<feature type="site" description="Transition state stabilizer" evidence="1">
    <location>
        <position position="237"/>
    </location>
</feature>
<organism>
    <name type="scientific">Flavobacterium johnsoniae (strain ATCC 17061 / DSM 2064 / JCM 8514 / BCRC 14874 / CCUG 350202 / NBRC 14942 / NCIMB 11054 / UW101)</name>
    <name type="common">Cytophaga johnsonae</name>
    <dbReference type="NCBI Taxonomy" id="376686"/>
    <lineage>
        <taxon>Bacteria</taxon>
        <taxon>Pseudomonadati</taxon>
        <taxon>Bacteroidota</taxon>
        <taxon>Flavobacteriia</taxon>
        <taxon>Flavobacteriales</taxon>
        <taxon>Flavobacteriaceae</taxon>
        <taxon>Flavobacterium</taxon>
    </lineage>
</organism>
<proteinExistence type="inferred from homology"/>
<dbReference type="EC" id="2.7.2.1" evidence="1"/>
<dbReference type="EMBL" id="CP000685">
    <property type="protein sequence ID" value="ABQ06542.1"/>
    <property type="molecule type" value="Genomic_DNA"/>
</dbReference>
<dbReference type="RefSeq" id="WP_012025509.1">
    <property type="nucleotide sequence ID" value="NC_009441.1"/>
</dbReference>
<dbReference type="SMR" id="A5FE24"/>
<dbReference type="STRING" id="376686.Fjoh_3528"/>
<dbReference type="KEGG" id="fjo:Fjoh_3528"/>
<dbReference type="eggNOG" id="COG0282">
    <property type="taxonomic scope" value="Bacteria"/>
</dbReference>
<dbReference type="HOGENOM" id="CLU_020352_0_1_10"/>
<dbReference type="OrthoDB" id="9802453at2"/>
<dbReference type="UniPathway" id="UPA00340">
    <property type="reaction ID" value="UER00458"/>
</dbReference>
<dbReference type="Proteomes" id="UP000006694">
    <property type="component" value="Chromosome"/>
</dbReference>
<dbReference type="GO" id="GO:0005737">
    <property type="term" value="C:cytoplasm"/>
    <property type="evidence" value="ECO:0007669"/>
    <property type="project" value="UniProtKB-SubCell"/>
</dbReference>
<dbReference type="GO" id="GO:0008776">
    <property type="term" value="F:acetate kinase activity"/>
    <property type="evidence" value="ECO:0007669"/>
    <property type="project" value="UniProtKB-UniRule"/>
</dbReference>
<dbReference type="GO" id="GO:0005524">
    <property type="term" value="F:ATP binding"/>
    <property type="evidence" value="ECO:0007669"/>
    <property type="project" value="UniProtKB-KW"/>
</dbReference>
<dbReference type="GO" id="GO:0000287">
    <property type="term" value="F:magnesium ion binding"/>
    <property type="evidence" value="ECO:0007669"/>
    <property type="project" value="UniProtKB-UniRule"/>
</dbReference>
<dbReference type="GO" id="GO:0006083">
    <property type="term" value="P:acetate metabolic process"/>
    <property type="evidence" value="ECO:0007669"/>
    <property type="project" value="TreeGrafter"/>
</dbReference>
<dbReference type="GO" id="GO:0006085">
    <property type="term" value="P:acetyl-CoA biosynthetic process"/>
    <property type="evidence" value="ECO:0007669"/>
    <property type="project" value="UniProtKB-UniRule"/>
</dbReference>
<dbReference type="CDD" id="cd24010">
    <property type="entry name" value="ASKHA_NBD_AcK_PK"/>
    <property type="match status" value="1"/>
</dbReference>
<dbReference type="Gene3D" id="3.30.420.40">
    <property type="match status" value="2"/>
</dbReference>
<dbReference type="HAMAP" id="MF_00020">
    <property type="entry name" value="Acetate_kinase"/>
    <property type="match status" value="1"/>
</dbReference>
<dbReference type="InterPro" id="IPR004372">
    <property type="entry name" value="Ac/propionate_kinase"/>
</dbReference>
<dbReference type="InterPro" id="IPR000890">
    <property type="entry name" value="Aliphatic_acid_kin_short-chain"/>
</dbReference>
<dbReference type="InterPro" id="IPR023865">
    <property type="entry name" value="Aliphatic_acid_kinase_CS"/>
</dbReference>
<dbReference type="InterPro" id="IPR043129">
    <property type="entry name" value="ATPase_NBD"/>
</dbReference>
<dbReference type="NCBIfam" id="TIGR00016">
    <property type="entry name" value="ackA"/>
    <property type="match status" value="1"/>
</dbReference>
<dbReference type="PANTHER" id="PTHR21060">
    <property type="entry name" value="ACETATE KINASE"/>
    <property type="match status" value="1"/>
</dbReference>
<dbReference type="PANTHER" id="PTHR21060:SF15">
    <property type="entry name" value="ACETATE KINASE-RELATED"/>
    <property type="match status" value="1"/>
</dbReference>
<dbReference type="Pfam" id="PF00871">
    <property type="entry name" value="Acetate_kinase"/>
    <property type="match status" value="1"/>
</dbReference>
<dbReference type="PIRSF" id="PIRSF000722">
    <property type="entry name" value="Acetate_prop_kin"/>
    <property type="match status" value="1"/>
</dbReference>
<dbReference type="PRINTS" id="PR00471">
    <property type="entry name" value="ACETATEKNASE"/>
</dbReference>
<dbReference type="SUPFAM" id="SSF53067">
    <property type="entry name" value="Actin-like ATPase domain"/>
    <property type="match status" value="2"/>
</dbReference>
<dbReference type="PROSITE" id="PS01075">
    <property type="entry name" value="ACETATE_KINASE_1"/>
    <property type="match status" value="1"/>
</dbReference>
<dbReference type="PROSITE" id="PS01076">
    <property type="entry name" value="ACETATE_KINASE_2"/>
    <property type="match status" value="1"/>
</dbReference>
<evidence type="ECO:0000255" key="1">
    <source>
        <dbReference type="HAMAP-Rule" id="MF_00020"/>
    </source>
</evidence>
<name>ACKA_FLAJ1</name>
<keyword id="KW-0067">ATP-binding</keyword>
<keyword id="KW-0963">Cytoplasm</keyword>
<keyword id="KW-0418">Kinase</keyword>
<keyword id="KW-0460">Magnesium</keyword>
<keyword id="KW-0479">Metal-binding</keyword>
<keyword id="KW-0547">Nucleotide-binding</keyword>
<keyword id="KW-0808">Transferase</keyword>
<protein>
    <recommendedName>
        <fullName evidence="1">Acetate kinase</fullName>
        <ecNumber evidence="1">2.7.2.1</ecNumber>
    </recommendedName>
    <alternativeName>
        <fullName evidence="1">Acetokinase</fullName>
    </alternativeName>
</protein>